<sequence>MHTSELLKHIYDINLSYLLLAQRLIVQDKASAMFRLGINEEMATTLAALTLPQMVKLAETNQLVCHFRFDSHQTITQLTQDSRVDDLQQIHTGIMLSTRLLNDVNQPEEALRKKRA</sequence>
<comment type="function">
    <text evidence="1">Functions in complex with FlhC as a master transcriptional regulator that regulates transcription of several flagellar and non-flagellar operons by binding to their promoter region. Activates expression of class 2 flagellar genes, including fliA, which is a flagellum-specific sigma factor that turns on the class 3 genes. Also regulates genes whose products function in a variety of physiological pathways.</text>
</comment>
<comment type="subunit">
    <text evidence="1">Homodimer; disulfide-linked. Forms a heterohexamer composed of two FlhC and four FlhD subunits. Each FlhC binds a FlhD dimer, forming a heterotrimer, and a hexamer assembles by dimerization of two heterotrimers.</text>
</comment>
<comment type="subcellular location">
    <subcellularLocation>
        <location evidence="1">Cytoplasm</location>
    </subcellularLocation>
</comment>
<comment type="domain">
    <text evidence="1">The C-terminal region contains a putative helix-turn-helix (HTH) motif, suggesting that this region may bind DNA.</text>
</comment>
<comment type="similarity">
    <text evidence="1">Belongs to the FlhD family.</text>
</comment>
<dbReference type="EMBL" id="FM180568">
    <property type="protein sequence ID" value="CAS09563.1"/>
    <property type="molecule type" value="Genomic_DNA"/>
</dbReference>
<dbReference type="RefSeq" id="WP_001295647.1">
    <property type="nucleotide sequence ID" value="NC_011601.1"/>
</dbReference>
<dbReference type="SMR" id="B7USR7"/>
<dbReference type="GeneID" id="93776197"/>
<dbReference type="KEGG" id="ecg:E2348C_2015"/>
<dbReference type="HOGENOM" id="CLU_144160_0_0_6"/>
<dbReference type="Proteomes" id="UP000008205">
    <property type="component" value="Chromosome"/>
</dbReference>
<dbReference type="GO" id="GO:0005737">
    <property type="term" value="C:cytoplasm"/>
    <property type="evidence" value="ECO:0007669"/>
    <property type="project" value="UniProtKB-SubCell"/>
</dbReference>
<dbReference type="GO" id="GO:0003677">
    <property type="term" value="F:DNA binding"/>
    <property type="evidence" value="ECO:0007669"/>
    <property type="project" value="UniProtKB-UniRule"/>
</dbReference>
<dbReference type="GO" id="GO:0044780">
    <property type="term" value="P:bacterial-type flagellum assembly"/>
    <property type="evidence" value="ECO:0007669"/>
    <property type="project" value="InterPro"/>
</dbReference>
<dbReference type="GO" id="GO:0045893">
    <property type="term" value="P:positive regulation of DNA-templated transcription"/>
    <property type="evidence" value="ECO:0007669"/>
    <property type="project" value="InterPro"/>
</dbReference>
<dbReference type="GO" id="GO:1902208">
    <property type="term" value="P:regulation of bacterial-type flagellum assembly"/>
    <property type="evidence" value="ECO:0007669"/>
    <property type="project" value="UniProtKB-UniRule"/>
</dbReference>
<dbReference type="FunFam" id="1.10.4000.10:FF:000001">
    <property type="entry name" value="Flagellar transcriptional regulator FlhD"/>
    <property type="match status" value="1"/>
</dbReference>
<dbReference type="Gene3D" id="1.10.4000.10">
    <property type="entry name" value="Flagellar transcriptional activator FlhD"/>
    <property type="match status" value="1"/>
</dbReference>
<dbReference type="HAMAP" id="MF_00725">
    <property type="entry name" value="FlhD"/>
    <property type="match status" value="1"/>
</dbReference>
<dbReference type="InterPro" id="IPR023559">
    <property type="entry name" value="Flagellar_FlhD"/>
</dbReference>
<dbReference type="InterPro" id="IPR036194">
    <property type="entry name" value="FlhD_sf"/>
</dbReference>
<dbReference type="NCBIfam" id="NF002783">
    <property type="entry name" value="PRK02909.1-1"/>
    <property type="match status" value="1"/>
</dbReference>
<dbReference type="Pfam" id="PF05247">
    <property type="entry name" value="FlhD"/>
    <property type="match status" value="1"/>
</dbReference>
<dbReference type="SUPFAM" id="SSF63592">
    <property type="entry name" value="Flagellar transcriptional activator FlhD"/>
    <property type="match status" value="1"/>
</dbReference>
<keyword id="KW-0010">Activator</keyword>
<keyword id="KW-1005">Bacterial flagellum biogenesis</keyword>
<keyword id="KW-0963">Cytoplasm</keyword>
<keyword id="KW-1015">Disulfide bond</keyword>
<keyword id="KW-0238">DNA-binding</keyword>
<keyword id="KW-1185">Reference proteome</keyword>
<keyword id="KW-0804">Transcription</keyword>
<keyword id="KW-0805">Transcription regulation</keyword>
<protein>
    <recommendedName>
        <fullName evidence="1">Flagellar transcriptional regulator FlhD</fullName>
    </recommendedName>
</protein>
<proteinExistence type="inferred from homology"/>
<organism>
    <name type="scientific">Escherichia coli O127:H6 (strain E2348/69 / EPEC)</name>
    <dbReference type="NCBI Taxonomy" id="574521"/>
    <lineage>
        <taxon>Bacteria</taxon>
        <taxon>Pseudomonadati</taxon>
        <taxon>Pseudomonadota</taxon>
        <taxon>Gammaproteobacteria</taxon>
        <taxon>Enterobacterales</taxon>
        <taxon>Enterobacteriaceae</taxon>
        <taxon>Escherichia</taxon>
    </lineage>
</organism>
<feature type="chain" id="PRO_1000148055" description="Flagellar transcriptional regulator FlhD">
    <location>
        <begin position="1"/>
        <end position="116"/>
    </location>
</feature>
<feature type="disulfide bond" description="Interchain" evidence="1">
    <location>
        <position position="65"/>
    </location>
</feature>
<accession>B7USR7</accession>
<gene>
    <name evidence="1" type="primary">flhD</name>
    <name type="ordered locus">E2348C_2015</name>
</gene>
<reference key="1">
    <citation type="journal article" date="2009" name="J. Bacteriol.">
        <title>Complete genome sequence and comparative genome analysis of enteropathogenic Escherichia coli O127:H6 strain E2348/69.</title>
        <authorList>
            <person name="Iguchi A."/>
            <person name="Thomson N.R."/>
            <person name="Ogura Y."/>
            <person name="Saunders D."/>
            <person name="Ooka T."/>
            <person name="Henderson I.R."/>
            <person name="Harris D."/>
            <person name="Asadulghani M."/>
            <person name="Kurokawa K."/>
            <person name="Dean P."/>
            <person name="Kenny B."/>
            <person name="Quail M.A."/>
            <person name="Thurston S."/>
            <person name="Dougan G."/>
            <person name="Hayashi T."/>
            <person name="Parkhill J."/>
            <person name="Frankel G."/>
        </authorList>
    </citation>
    <scope>NUCLEOTIDE SEQUENCE [LARGE SCALE GENOMIC DNA]</scope>
    <source>
        <strain>E2348/69 / EPEC</strain>
    </source>
</reference>
<evidence type="ECO:0000255" key="1">
    <source>
        <dbReference type="HAMAP-Rule" id="MF_00725"/>
    </source>
</evidence>
<name>FLHD_ECO27</name>